<feature type="chain" id="PRO_1000064750" description="Ribosome maturation factor RimP">
    <location>
        <begin position="1"/>
        <end position="152"/>
    </location>
</feature>
<evidence type="ECO:0000255" key="1">
    <source>
        <dbReference type="HAMAP-Rule" id="MF_01077"/>
    </source>
</evidence>
<protein>
    <recommendedName>
        <fullName evidence="1">Ribosome maturation factor RimP</fullName>
    </recommendedName>
</protein>
<reference key="1">
    <citation type="submission" date="2007-04" db="EMBL/GenBank/DDBJ databases">
        <title>Complete sequence of Pseudomonas mendocina ymp.</title>
        <authorList>
            <consortium name="US DOE Joint Genome Institute"/>
            <person name="Copeland A."/>
            <person name="Lucas S."/>
            <person name="Lapidus A."/>
            <person name="Barry K."/>
            <person name="Glavina del Rio T."/>
            <person name="Dalin E."/>
            <person name="Tice H."/>
            <person name="Pitluck S."/>
            <person name="Kiss H."/>
            <person name="Brettin T."/>
            <person name="Detter J.C."/>
            <person name="Bruce D."/>
            <person name="Han C."/>
            <person name="Schmutz J."/>
            <person name="Larimer F."/>
            <person name="Land M."/>
            <person name="Hauser L."/>
            <person name="Kyrpides N."/>
            <person name="Mikhailova N."/>
            <person name="Hersman L."/>
            <person name="Dubois J."/>
            <person name="Maurice P."/>
            <person name="Richardson P."/>
        </authorList>
    </citation>
    <scope>NUCLEOTIDE SEQUENCE [LARGE SCALE GENOMIC DNA]</scope>
    <source>
        <strain>ymp</strain>
    </source>
</reference>
<comment type="function">
    <text evidence="1">Required for maturation of 30S ribosomal subunits.</text>
</comment>
<comment type="subcellular location">
    <subcellularLocation>
        <location evidence="1">Cytoplasm</location>
    </subcellularLocation>
</comment>
<comment type="similarity">
    <text evidence="1">Belongs to the RimP family.</text>
</comment>
<sequence>MSSKLEQLQALLAPVIEALGYQCWGIEFLSQGRHSLLRVYIDKADGILIDDCEIVSRQLSGVLDVEDPISSEYTLEVSSPGMDRPLFTLEQFAAHVGEQVKIKLRSPFEGRRNFQGLLRGVEEQDVVVQVDDHEYLLPIDLIDKANIIPRFD</sequence>
<accession>A4XYE2</accession>
<dbReference type="EMBL" id="CP000680">
    <property type="protein sequence ID" value="ABP86358.1"/>
    <property type="molecule type" value="Genomic_DNA"/>
</dbReference>
<dbReference type="SMR" id="A4XYE2"/>
<dbReference type="STRING" id="399739.Pmen_3610"/>
<dbReference type="KEGG" id="pmy:Pmen_3610"/>
<dbReference type="PATRIC" id="fig|399739.8.peg.3659"/>
<dbReference type="eggNOG" id="COG0779">
    <property type="taxonomic scope" value="Bacteria"/>
</dbReference>
<dbReference type="HOGENOM" id="CLU_070525_1_1_6"/>
<dbReference type="OrthoDB" id="9805006at2"/>
<dbReference type="GO" id="GO:0005829">
    <property type="term" value="C:cytosol"/>
    <property type="evidence" value="ECO:0007669"/>
    <property type="project" value="TreeGrafter"/>
</dbReference>
<dbReference type="GO" id="GO:0000028">
    <property type="term" value="P:ribosomal small subunit assembly"/>
    <property type="evidence" value="ECO:0007669"/>
    <property type="project" value="TreeGrafter"/>
</dbReference>
<dbReference type="GO" id="GO:0006412">
    <property type="term" value="P:translation"/>
    <property type="evidence" value="ECO:0007669"/>
    <property type="project" value="TreeGrafter"/>
</dbReference>
<dbReference type="CDD" id="cd01734">
    <property type="entry name" value="YlxS_C"/>
    <property type="match status" value="1"/>
</dbReference>
<dbReference type="FunFam" id="3.30.300.70:FF:000001">
    <property type="entry name" value="Ribosome maturation factor RimP"/>
    <property type="match status" value="1"/>
</dbReference>
<dbReference type="Gene3D" id="2.30.30.180">
    <property type="entry name" value="Ribosome maturation factor RimP, C-terminal domain"/>
    <property type="match status" value="1"/>
</dbReference>
<dbReference type="Gene3D" id="3.30.300.70">
    <property type="entry name" value="RimP-like superfamily, N-terminal"/>
    <property type="match status" value="1"/>
</dbReference>
<dbReference type="HAMAP" id="MF_01077">
    <property type="entry name" value="RimP"/>
    <property type="match status" value="1"/>
</dbReference>
<dbReference type="InterPro" id="IPR003728">
    <property type="entry name" value="Ribosome_maturation_RimP"/>
</dbReference>
<dbReference type="InterPro" id="IPR028998">
    <property type="entry name" value="RimP_C"/>
</dbReference>
<dbReference type="InterPro" id="IPR036847">
    <property type="entry name" value="RimP_C_sf"/>
</dbReference>
<dbReference type="InterPro" id="IPR028989">
    <property type="entry name" value="RimP_N"/>
</dbReference>
<dbReference type="InterPro" id="IPR035956">
    <property type="entry name" value="RimP_N_sf"/>
</dbReference>
<dbReference type="NCBIfam" id="NF000927">
    <property type="entry name" value="PRK00092.1-1"/>
    <property type="match status" value="1"/>
</dbReference>
<dbReference type="PANTHER" id="PTHR33867">
    <property type="entry name" value="RIBOSOME MATURATION FACTOR RIMP"/>
    <property type="match status" value="1"/>
</dbReference>
<dbReference type="PANTHER" id="PTHR33867:SF1">
    <property type="entry name" value="RIBOSOME MATURATION FACTOR RIMP"/>
    <property type="match status" value="1"/>
</dbReference>
<dbReference type="Pfam" id="PF17384">
    <property type="entry name" value="DUF150_C"/>
    <property type="match status" value="1"/>
</dbReference>
<dbReference type="Pfam" id="PF02576">
    <property type="entry name" value="RimP_N"/>
    <property type="match status" value="1"/>
</dbReference>
<dbReference type="SUPFAM" id="SSF74942">
    <property type="entry name" value="YhbC-like, C-terminal domain"/>
    <property type="match status" value="1"/>
</dbReference>
<dbReference type="SUPFAM" id="SSF75420">
    <property type="entry name" value="YhbC-like, N-terminal domain"/>
    <property type="match status" value="1"/>
</dbReference>
<gene>
    <name evidence="1" type="primary">rimP</name>
    <name type="ordered locus">Pmen_3610</name>
</gene>
<name>RIMP_ECTM1</name>
<keyword id="KW-0963">Cytoplasm</keyword>
<keyword id="KW-0690">Ribosome biogenesis</keyword>
<organism>
    <name type="scientific">Ectopseudomonas mendocina (strain ymp)</name>
    <name type="common">Pseudomonas mendocina</name>
    <dbReference type="NCBI Taxonomy" id="399739"/>
    <lineage>
        <taxon>Bacteria</taxon>
        <taxon>Pseudomonadati</taxon>
        <taxon>Pseudomonadota</taxon>
        <taxon>Gammaproteobacteria</taxon>
        <taxon>Pseudomonadales</taxon>
        <taxon>Pseudomonadaceae</taxon>
        <taxon>Ectopseudomonas</taxon>
    </lineage>
</organism>
<proteinExistence type="inferred from homology"/>